<keyword id="KW-0067">ATP-binding</keyword>
<keyword id="KW-0175">Coiled coil</keyword>
<keyword id="KW-0963">Cytoplasm</keyword>
<keyword id="KW-0479">Metal-binding</keyword>
<keyword id="KW-0507">mRNA processing</keyword>
<keyword id="KW-0547">Nucleotide-binding</keyword>
<keyword id="KW-1185">Reference proteome</keyword>
<keyword id="KW-0862">Zinc</keyword>
<keyword id="KW-0863">Zinc-finger</keyword>
<protein>
    <recommendedName>
        <fullName evidence="1">PAN2-PAN3 deadenylation complex subunit pan3</fullName>
    </recommendedName>
    <alternativeName>
        <fullName evidence="1">PAB1P-dependent poly(A)-specific ribonuclease</fullName>
    </alternativeName>
    <alternativeName>
        <fullName evidence="1">Poly(A)-nuclease deadenylation complex subunit 3</fullName>
        <shortName evidence="1">PAN deadenylation complex subunit 3</shortName>
    </alternativeName>
</protein>
<gene>
    <name evidence="1" type="primary">pan3</name>
    <name type="ORF">DDB_G0279129</name>
</gene>
<sequence length="746" mass="86441">MMYQQQPKNQKQCKNIALHGYCRNSDKCEFSHELTPQQQQQQQQQQQQQQQQQQQQQQQQQQQQQQQQQQNSNGNGSNNTATSNNPIISPNSNIASPLKKSPIDNLTTSFQNLSTNQQTNHHWADHFQSGIPEYIPKQQLQQLQQQQLLQQQQQQALLLQQQQQQNYDDDQHLYPYGDNSVDDYEQHQYEPQPQPNNGIDPNMNNQFQINNFVAAQMRNASPQSYQQQFQQPNPSPQSSSQQQQQQQQQQQQAVYQQQQQQQPSSQPLAQNPSLQNNNNKLLQLQLQQHLQQIQAAQQQAQINQSYTPYPSYSQSVIRNKPGRRNIGSFFMSESLKQDILNQKSLLYLTLDPNDPRIKNIPPMLNKYHSLYPLDHDASRENQGKMFGYITSVYKAISTLDGLPYAIRRVEGFRLSSEYALQAAETWRNIQHPNIVSLKEIFVSKEFGDNSSLFFTYEFFPGSETLESKYLSQSGNPLSESVLWSFICQITSALKTIHSAGLVCRVIHPSKILLTGKNRIRMNGVGIFDVVNFDTPRILAQYQHEDLLLFGRLILTLACRSAQSTTTTNLSKSIEYVSNQYSKELYNLIVYLLTKPVINLPNIDEVVLMISGRLLQENNYLHTYTDDLETELSKEYENGRLFRLVTKLGFINERPLYDMDPRWSETGDRYLIKLFRDYIFHQVYDDGTPVLDFYHVVETLNKLDCGVDEKILLMSRDEQSLLVVSYKDLKKCIDSAFSELVSQKSHI</sequence>
<proteinExistence type="inferred from homology"/>
<accession>P0CD65</accession>
<comment type="function">
    <text evidence="1">Regulatory subunit of the poly(A)-nuclease (PAN) deadenylation complex, one of two cytoplasmic mRNA deadenylases involved in mRNA turnover. PAN specifically shortens poly(A) tails of RNA and the activity is stimulated by poly(A)-binding protein (PABP). PAN deadenylation is followed by rapid degradation of the shortened mRNA tails by the CCR4-NOT complex. Deadenylated mRNAs are then degraded by two alternative mechanisms, namely exosome-mediated 3'-5' exonucleolytic degradation, or deadenylation-dependent mRNA decaping and subsequent 5'-3' exonucleolytic degradation by XRN1. PAN3 acts as a positive regulator for PAN activity, recruiting the catalytic subunit PAN2 to mRNA via its interaction with RNA and PABP.</text>
</comment>
<comment type="subunit">
    <text evidence="1">Homodimer. Forms a heterotrimer with a catalytic subunit PAN2 to form the poly(A)-nuclease (PAN) deadenylation complex. Interacts (via PAM-2 motif) with poly(A)-binding protein (via PABC domain), conferring substrate specificity of the enzyme complex.</text>
</comment>
<comment type="subcellular location">
    <subcellularLocation>
        <location evidence="1">Cytoplasm</location>
    </subcellularLocation>
</comment>
<comment type="domain">
    <text evidence="1">The N-terminal zinc finger binds to poly(A) RNA.</text>
</comment>
<comment type="domain">
    <text evidence="1">The pseudokinase domain, the coiled-coil (CC), and C-terminal knob domain (CK) form a structural unit (PKC) that forms an extensive high-affinity interaction surface for pan2.</text>
</comment>
<comment type="domain">
    <text evidence="1">Contains a pseudokinase domain. The protein kinase domain is predicted to be catalytically inactive because some of the residues important for catalytic activity are substituted and it lacks the equivalent of the binding site for a peptide substrate. However, it has retained an ATP-binding site and ATP-binding is required for mRNA degradation, stimulating the activity of the pan2 nuclease in vitro. The nucleotide-binding site is juxtaposed to the RNase active site of pan2 in the complex and may actually bind nucleosides of a poly(A) RNA rather than ATP, feeding the poly(A)-tail to the active site of the deadenylase and thus increasing the efficiency with which this distributive enzyme degrades oligo(A) RNAs.</text>
</comment>
<comment type="similarity">
    <text evidence="1">Belongs to the protein kinase superfamily. PAN3 family.</text>
</comment>
<dbReference type="EMBL" id="AAFI02000094">
    <property type="status" value="NOT_ANNOTATED_CDS"/>
    <property type="molecule type" value="Genomic_DNA"/>
</dbReference>
<dbReference type="EMBL" id="AAFI02000095">
    <property type="status" value="NOT_ANNOTATED_CDS"/>
    <property type="molecule type" value="Genomic_DNA"/>
</dbReference>
<dbReference type="SMR" id="P0CD65"/>
<dbReference type="FunCoup" id="P0CD65">
    <property type="interactions" value="286"/>
</dbReference>
<dbReference type="STRING" id="44689.P0CD65"/>
<dbReference type="dictyBase" id="DDB_G0279129">
    <property type="gene designation" value="pan3"/>
</dbReference>
<dbReference type="InParanoid" id="P0CD65"/>
<dbReference type="OMA" id="FFPGSET"/>
<dbReference type="PhylomeDB" id="P0CD65"/>
<dbReference type="PRO" id="PR:P0CD65"/>
<dbReference type="Proteomes" id="UP000002195">
    <property type="component" value="Chromosome 4"/>
</dbReference>
<dbReference type="GO" id="GO:0000932">
    <property type="term" value="C:P-body"/>
    <property type="evidence" value="ECO:0000318"/>
    <property type="project" value="GO_Central"/>
</dbReference>
<dbReference type="GO" id="GO:0031251">
    <property type="term" value="C:PAN complex"/>
    <property type="evidence" value="ECO:0000250"/>
    <property type="project" value="dictyBase"/>
</dbReference>
<dbReference type="GO" id="GO:0005524">
    <property type="term" value="F:ATP binding"/>
    <property type="evidence" value="ECO:0007669"/>
    <property type="project" value="UniProtKB-UniRule"/>
</dbReference>
<dbReference type="GO" id="GO:0008143">
    <property type="term" value="F:poly(A) binding"/>
    <property type="evidence" value="ECO:0000318"/>
    <property type="project" value="GO_Central"/>
</dbReference>
<dbReference type="GO" id="GO:0004672">
    <property type="term" value="F:protein kinase activity"/>
    <property type="evidence" value="ECO:0007669"/>
    <property type="project" value="InterPro"/>
</dbReference>
<dbReference type="GO" id="GO:0008270">
    <property type="term" value="F:zinc ion binding"/>
    <property type="evidence" value="ECO:0007669"/>
    <property type="project" value="UniProtKB-KW"/>
</dbReference>
<dbReference type="GO" id="GO:0006397">
    <property type="term" value="P:mRNA processing"/>
    <property type="evidence" value="ECO:0007669"/>
    <property type="project" value="UniProtKB-KW"/>
</dbReference>
<dbReference type="GO" id="GO:0000289">
    <property type="term" value="P:nuclear-transcribed mRNA poly(A) tail shortening"/>
    <property type="evidence" value="ECO:0000318"/>
    <property type="project" value="GO_Central"/>
</dbReference>
<dbReference type="FunFam" id="1.10.287.3700:FF:000001">
    <property type="entry name" value="PAN2-PAN3 deadenylation complex subunit PAN3"/>
    <property type="match status" value="1"/>
</dbReference>
<dbReference type="FunFam" id="1.20.5.5160:FF:000002">
    <property type="entry name" value="PAN2-PAN3 deadenylation complex subunit PAN3"/>
    <property type="match status" value="1"/>
</dbReference>
<dbReference type="Gene3D" id="1.10.287.3700">
    <property type="match status" value="1"/>
</dbReference>
<dbReference type="Gene3D" id="1.20.5.5160">
    <property type="match status" value="1"/>
</dbReference>
<dbReference type="Gene3D" id="6.10.250.3160">
    <property type="match status" value="1"/>
</dbReference>
<dbReference type="Gene3D" id="1.10.510.10">
    <property type="entry name" value="Transferase(Phosphotransferase) domain 1"/>
    <property type="match status" value="1"/>
</dbReference>
<dbReference type="HAMAP" id="MF_03181">
    <property type="entry name" value="PAN3"/>
    <property type="match status" value="1"/>
</dbReference>
<dbReference type="InterPro" id="IPR011009">
    <property type="entry name" value="Kinase-like_dom_sf"/>
</dbReference>
<dbReference type="InterPro" id="IPR030844">
    <property type="entry name" value="PAN3"/>
</dbReference>
<dbReference type="InterPro" id="IPR041332">
    <property type="entry name" value="Pan3_PK"/>
</dbReference>
<dbReference type="InterPro" id="IPR000719">
    <property type="entry name" value="Prot_kinase_dom"/>
</dbReference>
<dbReference type="InterPro" id="IPR000571">
    <property type="entry name" value="Znf_CCCH"/>
</dbReference>
<dbReference type="PANTHER" id="PTHR12272">
    <property type="entry name" value="DEADENYLATION COMPLEX SUBUNIT PAN3"/>
    <property type="match status" value="1"/>
</dbReference>
<dbReference type="PANTHER" id="PTHR12272:SF11">
    <property type="entry name" value="PAN2-PAN3 DEADENYLATION COMPLEX SUBUNIT PAN3"/>
    <property type="match status" value="1"/>
</dbReference>
<dbReference type="Pfam" id="PF18101">
    <property type="entry name" value="Pan3_PK"/>
    <property type="match status" value="1"/>
</dbReference>
<dbReference type="Pfam" id="PF00069">
    <property type="entry name" value="Pkinase"/>
    <property type="match status" value="1"/>
</dbReference>
<dbReference type="SMART" id="SM00220">
    <property type="entry name" value="S_TKc"/>
    <property type="match status" value="1"/>
</dbReference>
<dbReference type="SUPFAM" id="SSF56112">
    <property type="entry name" value="Protein kinase-like (PK-like)"/>
    <property type="match status" value="1"/>
</dbReference>
<dbReference type="PROSITE" id="PS50011">
    <property type="entry name" value="PROTEIN_KINASE_DOM"/>
    <property type="match status" value="1"/>
</dbReference>
<dbReference type="PROSITE" id="PS50103">
    <property type="entry name" value="ZF_C3H1"/>
    <property type="match status" value="1"/>
</dbReference>
<reference key="1">
    <citation type="journal article" date="2005" name="Nature">
        <title>The genome of the social amoeba Dictyostelium discoideum.</title>
        <authorList>
            <person name="Eichinger L."/>
            <person name="Pachebat J.A."/>
            <person name="Gloeckner G."/>
            <person name="Rajandream M.A."/>
            <person name="Sucgang R."/>
            <person name="Berriman M."/>
            <person name="Song J."/>
            <person name="Olsen R."/>
            <person name="Szafranski K."/>
            <person name="Xu Q."/>
            <person name="Tunggal B."/>
            <person name="Kummerfeld S."/>
            <person name="Madera M."/>
            <person name="Konfortov B.A."/>
            <person name="Rivero F."/>
            <person name="Bankier A.T."/>
            <person name="Lehmann R."/>
            <person name="Hamlin N."/>
            <person name="Davies R."/>
            <person name="Gaudet P."/>
            <person name="Fey P."/>
            <person name="Pilcher K."/>
            <person name="Chen G."/>
            <person name="Saunders D."/>
            <person name="Sodergren E.J."/>
            <person name="Davis P."/>
            <person name="Kerhornou A."/>
            <person name="Nie X."/>
            <person name="Hall N."/>
            <person name="Anjard C."/>
            <person name="Hemphill L."/>
            <person name="Bason N."/>
            <person name="Farbrother P."/>
            <person name="Desany B."/>
            <person name="Just E."/>
            <person name="Morio T."/>
            <person name="Rost R."/>
            <person name="Churcher C.M."/>
            <person name="Cooper J."/>
            <person name="Haydock S."/>
            <person name="van Driessche N."/>
            <person name="Cronin A."/>
            <person name="Goodhead I."/>
            <person name="Muzny D.M."/>
            <person name="Mourier T."/>
            <person name="Pain A."/>
            <person name="Lu M."/>
            <person name="Harper D."/>
            <person name="Lindsay R."/>
            <person name="Hauser H."/>
            <person name="James K.D."/>
            <person name="Quiles M."/>
            <person name="Madan Babu M."/>
            <person name="Saito T."/>
            <person name="Buchrieser C."/>
            <person name="Wardroper A."/>
            <person name="Felder M."/>
            <person name="Thangavelu M."/>
            <person name="Johnson D."/>
            <person name="Knights A."/>
            <person name="Loulseged H."/>
            <person name="Mungall K.L."/>
            <person name="Oliver K."/>
            <person name="Price C."/>
            <person name="Quail M.A."/>
            <person name="Urushihara H."/>
            <person name="Hernandez J."/>
            <person name="Rabbinowitsch E."/>
            <person name="Steffen D."/>
            <person name="Sanders M."/>
            <person name="Ma J."/>
            <person name="Kohara Y."/>
            <person name="Sharp S."/>
            <person name="Simmonds M.N."/>
            <person name="Spiegler S."/>
            <person name="Tivey A."/>
            <person name="Sugano S."/>
            <person name="White B."/>
            <person name="Walker D."/>
            <person name="Woodward J.R."/>
            <person name="Winckler T."/>
            <person name="Tanaka Y."/>
            <person name="Shaulsky G."/>
            <person name="Schleicher M."/>
            <person name="Weinstock G.M."/>
            <person name="Rosenthal A."/>
            <person name="Cox E.C."/>
            <person name="Chisholm R.L."/>
            <person name="Gibbs R.A."/>
            <person name="Loomis W.F."/>
            <person name="Platzer M."/>
            <person name="Kay R.R."/>
            <person name="Williams J.G."/>
            <person name="Dear P.H."/>
            <person name="Noegel A.A."/>
            <person name="Barrell B.G."/>
            <person name="Kuspa A."/>
        </authorList>
    </citation>
    <scope>NUCLEOTIDE SEQUENCE [LARGE SCALE GENOMIC DNA]</scope>
    <source>
        <strain>AX4</strain>
    </source>
</reference>
<organism>
    <name type="scientific">Dictyostelium discoideum</name>
    <name type="common">Social amoeba</name>
    <dbReference type="NCBI Taxonomy" id="44689"/>
    <lineage>
        <taxon>Eukaryota</taxon>
        <taxon>Amoebozoa</taxon>
        <taxon>Evosea</taxon>
        <taxon>Eumycetozoa</taxon>
        <taxon>Dictyostelia</taxon>
        <taxon>Dictyosteliales</taxon>
        <taxon>Dictyosteliaceae</taxon>
        <taxon>Dictyostelium</taxon>
    </lineage>
</organism>
<name>PAN3_DICDI</name>
<evidence type="ECO:0000255" key="1">
    <source>
        <dbReference type="HAMAP-Rule" id="MF_03181"/>
    </source>
</evidence>
<evidence type="ECO:0000256" key="2">
    <source>
        <dbReference type="SAM" id="MobiDB-lite"/>
    </source>
</evidence>
<feature type="chain" id="PRO_0000391338" description="PAN2-PAN3 deadenylation complex subunit pan3">
    <location>
        <begin position="1"/>
        <end position="746"/>
    </location>
</feature>
<feature type="zinc finger region" description="C3H1-type" evidence="1">
    <location>
        <begin position="7"/>
        <end position="35"/>
    </location>
</feature>
<feature type="region of interest" description="Disordered" evidence="2">
    <location>
        <begin position="64"/>
        <end position="100"/>
    </location>
</feature>
<feature type="region of interest" description="Disordered" evidence="2">
    <location>
        <begin position="169"/>
        <end position="205"/>
    </location>
</feature>
<feature type="region of interest" description="Disordered" evidence="2">
    <location>
        <begin position="219"/>
        <end position="275"/>
    </location>
</feature>
<feature type="region of interest" description="Pseudokinase domain" evidence="1">
    <location>
        <begin position="351"/>
        <end position="610"/>
    </location>
</feature>
<feature type="region of interest" description="Knob domain" evidence="1">
    <location>
        <begin position="650"/>
        <end position="746"/>
    </location>
</feature>
<feature type="coiled-coil region" evidence="1">
    <location>
        <begin position="611"/>
        <end position="649"/>
    </location>
</feature>
<feature type="compositionally biased region" description="Low complexity" evidence="2">
    <location>
        <begin position="64"/>
        <end position="97"/>
    </location>
</feature>
<feature type="compositionally biased region" description="Polar residues" evidence="2">
    <location>
        <begin position="196"/>
        <end position="205"/>
    </location>
</feature>
<feature type="compositionally biased region" description="Low complexity" evidence="2">
    <location>
        <begin position="221"/>
        <end position="275"/>
    </location>
</feature>
<feature type="binding site" evidence="1">
    <location>
        <position position="407"/>
    </location>
    <ligand>
        <name>ATP</name>
        <dbReference type="ChEBI" id="CHEBI:30616"/>
    </ligand>
</feature>
<feature type="binding site" evidence="1">
    <location>
        <begin position="457"/>
        <end position="464"/>
    </location>
    <ligand>
        <name>ATP</name>
        <dbReference type="ChEBI" id="CHEBI:30616"/>
    </ligand>
</feature>
<feature type="binding site" evidence="1">
    <location>
        <begin position="509"/>
        <end position="510"/>
    </location>
    <ligand>
        <name>ATP</name>
        <dbReference type="ChEBI" id="CHEBI:30616"/>
    </ligand>
</feature>